<feature type="chain" id="PRO_0000100584" description="Phosphoribosylformylglycinamidine synthase subunit PurQ">
    <location>
        <begin position="1"/>
        <end position="223"/>
    </location>
</feature>
<feature type="domain" description="Glutamine amidotransferase type-1" evidence="1">
    <location>
        <begin position="3"/>
        <end position="223"/>
    </location>
</feature>
<feature type="active site" description="Nucleophile" evidence="1">
    <location>
        <position position="85"/>
    </location>
</feature>
<feature type="active site" evidence="1">
    <location>
        <position position="193"/>
    </location>
</feature>
<feature type="active site" evidence="1">
    <location>
        <position position="195"/>
    </location>
</feature>
<evidence type="ECO:0000255" key="1">
    <source>
        <dbReference type="HAMAP-Rule" id="MF_00421"/>
    </source>
</evidence>
<keyword id="KW-0067">ATP-binding</keyword>
<keyword id="KW-0963">Cytoplasm</keyword>
<keyword id="KW-0315">Glutamine amidotransferase</keyword>
<keyword id="KW-0378">Hydrolase</keyword>
<keyword id="KW-0436">Ligase</keyword>
<keyword id="KW-0547">Nucleotide-binding</keyword>
<keyword id="KW-0658">Purine biosynthesis</keyword>
<protein>
    <recommendedName>
        <fullName evidence="1">Phosphoribosylformylglycinamidine synthase subunit PurQ</fullName>
        <shortName evidence="1">FGAM synthase</shortName>
        <ecNumber evidence="1">6.3.5.3</ecNumber>
    </recommendedName>
    <alternativeName>
        <fullName evidence="1">Formylglycinamide ribonucleotide amidotransferase subunit I</fullName>
        <shortName evidence="1">FGAR amidotransferase I</shortName>
        <shortName evidence="1">FGAR-AT I</shortName>
    </alternativeName>
    <alternativeName>
        <fullName evidence="1">Glutaminase PurQ</fullName>
        <ecNumber evidence="1">3.5.1.2</ecNumber>
    </alternativeName>
    <alternativeName>
        <fullName evidence="1">Phosphoribosylformylglycinamidine synthase subunit I</fullName>
    </alternativeName>
</protein>
<comment type="function">
    <text evidence="1">Part of the phosphoribosylformylglycinamidine synthase complex involved in the purines biosynthetic pathway. Catalyzes the ATP-dependent conversion of formylglycinamide ribonucleotide (FGAR) and glutamine to yield formylglycinamidine ribonucleotide (FGAM) and glutamate. The FGAM synthase complex is composed of three subunits. PurQ produces an ammonia molecule by converting glutamine to glutamate. PurL transfers the ammonia molecule to FGAR to form FGAM in an ATP-dependent manner. PurS interacts with PurQ and PurL and is thought to assist in the transfer of the ammonia molecule from PurQ to PurL.</text>
</comment>
<comment type="catalytic activity">
    <reaction evidence="1">
        <text>N(2)-formyl-N(1)-(5-phospho-beta-D-ribosyl)glycinamide + L-glutamine + ATP + H2O = 2-formamido-N(1)-(5-O-phospho-beta-D-ribosyl)acetamidine + L-glutamate + ADP + phosphate + H(+)</text>
        <dbReference type="Rhea" id="RHEA:17129"/>
        <dbReference type="ChEBI" id="CHEBI:15377"/>
        <dbReference type="ChEBI" id="CHEBI:15378"/>
        <dbReference type="ChEBI" id="CHEBI:29985"/>
        <dbReference type="ChEBI" id="CHEBI:30616"/>
        <dbReference type="ChEBI" id="CHEBI:43474"/>
        <dbReference type="ChEBI" id="CHEBI:58359"/>
        <dbReference type="ChEBI" id="CHEBI:147286"/>
        <dbReference type="ChEBI" id="CHEBI:147287"/>
        <dbReference type="ChEBI" id="CHEBI:456216"/>
        <dbReference type="EC" id="6.3.5.3"/>
    </reaction>
</comment>
<comment type="catalytic activity">
    <reaction evidence="1">
        <text>L-glutamine + H2O = L-glutamate + NH4(+)</text>
        <dbReference type="Rhea" id="RHEA:15889"/>
        <dbReference type="ChEBI" id="CHEBI:15377"/>
        <dbReference type="ChEBI" id="CHEBI:28938"/>
        <dbReference type="ChEBI" id="CHEBI:29985"/>
        <dbReference type="ChEBI" id="CHEBI:58359"/>
        <dbReference type="EC" id="3.5.1.2"/>
    </reaction>
</comment>
<comment type="pathway">
    <text evidence="1">Purine metabolism; IMP biosynthesis via de novo pathway; 5-amino-1-(5-phospho-D-ribosyl)imidazole from N(2)-formyl-N(1)-(5-phospho-D-ribosyl)glycinamide: step 1/2.</text>
</comment>
<comment type="subunit">
    <text evidence="1">Part of the FGAM synthase complex composed of 1 PurL, 1 PurQ and 2 PurS subunits.</text>
</comment>
<comment type="subcellular location">
    <subcellularLocation>
        <location evidence="1">Cytoplasm</location>
    </subcellularLocation>
</comment>
<name>PURQ_STAAM</name>
<gene>
    <name evidence="1" type="primary">purQ</name>
    <name type="ordered locus">SAV1068</name>
</gene>
<accession>P65904</accession>
<accession>Q99V29</accession>
<sequence>MKFAVLVFPGSNCDRDMFNAAIKSGVEAEYVDYRETSLSGFDGVLIPGGFSFGDYLRSGAMASVAPIISEVKRLATEGKPVLGVCNGFQILTEIGLLPGALLHNDSHLFISRNEELEIVNNQTAFTNLYEQGEKVIYPVAHGEGHYYCTDEIYQQLKANNQIILKYVNNPNGSYDDIAGIVNEKGNVCGMMPHPERALETLLGTDSGVKLFEAMVKSWREQHV</sequence>
<reference key="1">
    <citation type="journal article" date="2001" name="Lancet">
        <title>Whole genome sequencing of meticillin-resistant Staphylococcus aureus.</title>
        <authorList>
            <person name="Kuroda M."/>
            <person name="Ohta T."/>
            <person name="Uchiyama I."/>
            <person name="Baba T."/>
            <person name="Yuzawa H."/>
            <person name="Kobayashi I."/>
            <person name="Cui L."/>
            <person name="Oguchi A."/>
            <person name="Aoki K."/>
            <person name="Nagai Y."/>
            <person name="Lian J.-Q."/>
            <person name="Ito T."/>
            <person name="Kanamori M."/>
            <person name="Matsumaru H."/>
            <person name="Maruyama A."/>
            <person name="Murakami H."/>
            <person name="Hosoyama A."/>
            <person name="Mizutani-Ui Y."/>
            <person name="Takahashi N.K."/>
            <person name="Sawano T."/>
            <person name="Inoue R."/>
            <person name="Kaito C."/>
            <person name="Sekimizu K."/>
            <person name="Hirakawa H."/>
            <person name="Kuhara S."/>
            <person name="Goto S."/>
            <person name="Yabuzaki J."/>
            <person name="Kanehisa M."/>
            <person name="Yamashita A."/>
            <person name="Oshima K."/>
            <person name="Furuya K."/>
            <person name="Yoshino C."/>
            <person name="Shiba T."/>
            <person name="Hattori M."/>
            <person name="Ogasawara N."/>
            <person name="Hayashi H."/>
            <person name="Hiramatsu K."/>
        </authorList>
    </citation>
    <scope>NUCLEOTIDE SEQUENCE [LARGE SCALE GENOMIC DNA]</scope>
    <source>
        <strain>Mu50 / ATCC 700699</strain>
    </source>
</reference>
<proteinExistence type="inferred from homology"/>
<organism>
    <name type="scientific">Staphylococcus aureus (strain Mu50 / ATCC 700699)</name>
    <dbReference type="NCBI Taxonomy" id="158878"/>
    <lineage>
        <taxon>Bacteria</taxon>
        <taxon>Bacillati</taxon>
        <taxon>Bacillota</taxon>
        <taxon>Bacilli</taxon>
        <taxon>Bacillales</taxon>
        <taxon>Staphylococcaceae</taxon>
        <taxon>Staphylococcus</taxon>
    </lineage>
</organism>
<dbReference type="EC" id="6.3.5.3" evidence="1"/>
<dbReference type="EC" id="3.5.1.2" evidence="1"/>
<dbReference type="EMBL" id="BA000017">
    <property type="protein sequence ID" value="BAB57230.1"/>
    <property type="molecule type" value="Genomic_DNA"/>
</dbReference>
<dbReference type="RefSeq" id="WP_000666806.1">
    <property type="nucleotide sequence ID" value="NC_002758.2"/>
</dbReference>
<dbReference type="SMR" id="P65904"/>
<dbReference type="KEGG" id="sav:SAV1068"/>
<dbReference type="HOGENOM" id="CLU_001031_3_1_9"/>
<dbReference type="PhylomeDB" id="P65904"/>
<dbReference type="UniPathway" id="UPA00074">
    <property type="reaction ID" value="UER00128"/>
</dbReference>
<dbReference type="Proteomes" id="UP000002481">
    <property type="component" value="Chromosome"/>
</dbReference>
<dbReference type="GO" id="GO:0005737">
    <property type="term" value="C:cytoplasm"/>
    <property type="evidence" value="ECO:0007669"/>
    <property type="project" value="UniProtKB-SubCell"/>
</dbReference>
<dbReference type="GO" id="GO:0005524">
    <property type="term" value="F:ATP binding"/>
    <property type="evidence" value="ECO:0007669"/>
    <property type="project" value="UniProtKB-KW"/>
</dbReference>
<dbReference type="GO" id="GO:0004359">
    <property type="term" value="F:glutaminase activity"/>
    <property type="evidence" value="ECO:0007669"/>
    <property type="project" value="UniProtKB-EC"/>
</dbReference>
<dbReference type="GO" id="GO:0004642">
    <property type="term" value="F:phosphoribosylformylglycinamidine synthase activity"/>
    <property type="evidence" value="ECO:0007669"/>
    <property type="project" value="UniProtKB-UniRule"/>
</dbReference>
<dbReference type="GO" id="GO:0006189">
    <property type="term" value="P:'de novo' IMP biosynthetic process"/>
    <property type="evidence" value="ECO:0007669"/>
    <property type="project" value="UniProtKB-UniRule"/>
</dbReference>
<dbReference type="CDD" id="cd01740">
    <property type="entry name" value="GATase1_FGAR_AT"/>
    <property type="match status" value="1"/>
</dbReference>
<dbReference type="Gene3D" id="3.40.50.880">
    <property type="match status" value="1"/>
</dbReference>
<dbReference type="HAMAP" id="MF_00421">
    <property type="entry name" value="PurQ"/>
    <property type="match status" value="1"/>
</dbReference>
<dbReference type="InterPro" id="IPR029062">
    <property type="entry name" value="Class_I_gatase-like"/>
</dbReference>
<dbReference type="InterPro" id="IPR010075">
    <property type="entry name" value="PRibForGlyAmidine_synth_PurQ"/>
</dbReference>
<dbReference type="NCBIfam" id="TIGR01737">
    <property type="entry name" value="FGAM_synth_I"/>
    <property type="match status" value="1"/>
</dbReference>
<dbReference type="NCBIfam" id="NF002957">
    <property type="entry name" value="PRK03619.1"/>
    <property type="match status" value="1"/>
</dbReference>
<dbReference type="PANTHER" id="PTHR47552">
    <property type="entry name" value="PHOSPHORIBOSYLFORMYLGLYCINAMIDINE SYNTHASE SUBUNIT PURQ"/>
    <property type="match status" value="1"/>
</dbReference>
<dbReference type="PANTHER" id="PTHR47552:SF1">
    <property type="entry name" value="PHOSPHORIBOSYLFORMYLGLYCINAMIDINE SYNTHASE SUBUNIT PURQ"/>
    <property type="match status" value="1"/>
</dbReference>
<dbReference type="Pfam" id="PF13507">
    <property type="entry name" value="GATase_5"/>
    <property type="match status" value="1"/>
</dbReference>
<dbReference type="PIRSF" id="PIRSF001586">
    <property type="entry name" value="FGAM_synth_I"/>
    <property type="match status" value="1"/>
</dbReference>
<dbReference type="SMART" id="SM01211">
    <property type="entry name" value="GATase_5"/>
    <property type="match status" value="1"/>
</dbReference>
<dbReference type="SUPFAM" id="SSF52317">
    <property type="entry name" value="Class I glutamine amidotransferase-like"/>
    <property type="match status" value="1"/>
</dbReference>
<dbReference type="PROSITE" id="PS51273">
    <property type="entry name" value="GATASE_TYPE_1"/>
    <property type="match status" value="1"/>
</dbReference>